<proteinExistence type="inferred from homology"/>
<accession>Q4UK26</accession>
<feature type="chain" id="PRO_0000275926" description="NADH-quinone oxidoreductase subunit M">
    <location>
        <begin position="1"/>
        <end position="493"/>
    </location>
</feature>
<feature type="transmembrane region" description="Helical" evidence="2">
    <location>
        <begin position="5"/>
        <end position="25"/>
    </location>
</feature>
<feature type="transmembrane region" description="Helical" evidence="2">
    <location>
        <begin position="37"/>
        <end position="57"/>
    </location>
</feature>
<feature type="transmembrane region" description="Helical" evidence="2">
    <location>
        <begin position="89"/>
        <end position="109"/>
    </location>
</feature>
<feature type="transmembrane region" description="Helical" evidence="2">
    <location>
        <begin position="115"/>
        <end position="135"/>
    </location>
</feature>
<feature type="transmembrane region" description="Helical" evidence="2">
    <location>
        <begin position="139"/>
        <end position="159"/>
    </location>
</feature>
<feature type="transmembrane region" description="Helical" evidence="2">
    <location>
        <begin position="172"/>
        <end position="192"/>
    </location>
</feature>
<feature type="transmembrane region" description="Helical" evidence="2">
    <location>
        <begin position="216"/>
        <end position="236"/>
    </location>
</feature>
<feature type="transmembrane region" description="Helical" evidence="2">
    <location>
        <begin position="251"/>
        <end position="271"/>
    </location>
</feature>
<feature type="transmembrane region" description="Helical" evidence="2">
    <location>
        <begin position="280"/>
        <end position="300"/>
    </location>
</feature>
<feature type="transmembrane region" description="Helical" evidence="2">
    <location>
        <begin position="308"/>
        <end position="328"/>
    </location>
</feature>
<feature type="transmembrane region" description="Helical" evidence="2">
    <location>
        <begin position="334"/>
        <end position="354"/>
    </location>
</feature>
<feature type="transmembrane region" description="Helical" evidence="2">
    <location>
        <begin position="375"/>
        <end position="395"/>
    </location>
</feature>
<feature type="transmembrane region" description="Helical" evidence="2">
    <location>
        <begin position="411"/>
        <end position="431"/>
    </location>
</feature>
<feature type="transmembrane region" description="Helical" evidence="2">
    <location>
        <begin position="458"/>
        <end position="478"/>
    </location>
</feature>
<sequence length="493" mass="55251">MLELPIISISIFLPLISVLYILLFISQSKKADKAIYVMYVAVLSSVLTFISTIYILIEFDSSNPAYQFIERYAWLDKIGLEFHVGVDGISIFFVALTSFLTLICIIGSLFTVKKYIKEYLVCFLLMESFCIGAFTSVNLLLFYLFFEAILVPMYIIIGVWGGENRIYAALKFFLYTFFGSVFFLLSLIYIYSKIHNFDLTYIPELTGNIPLFTQQILWWAIFIAFAVKIPIIPFHTWLPDAHVQAPTSGSVILAGILLKFGGYGFLRVLLPLFSSVSQEFAIYVIYLSVIAIIYASLVALAQKDMKKMIAYSSIAHMGYVTIGIFSFTEAGVSGAIFQMLSHGVISSCLFLIVGTLYERLHTKEIAKYGGVASKMPVLATFFMIAMLGSVGLPGTSGFIGEFLSLLGIYKVNVIATFIAALGIILGAVYMLKLYKEVMLGEITNKEIMHFRDLYKYEIISIAPLILLIIYFGLMPSSILNVFRLSVESLLVKF</sequence>
<organism>
    <name type="scientific">Rickettsia felis (strain ATCC VR-1525 / URRWXCal2)</name>
    <name type="common">Rickettsia azadi</name>
    <dbReference type="NCBI Taxonomy" id="315456"/>
    <lineage>
        <taxon>Bacteria</taxon>
        <taxon>Pseudomonadati</taxon>
        <taxon>Pseudomonadota</taxon>
        <taxon>Alphaproteobacteria</taxon>
        <taxon>Rickettsiales</taxon>
        <taxon>Rickettsiaceae</taxon>
        <taxon>Rickettsieae</taxon>
        <taxon>Rickettsia</taxon>
        <taxon>spotted fever group</taxon>
    </lineage>
</organism>
<comment type="function">
    <text evidence="1">NDH-1 shuttles electrons from NADH, via FMN and iron-sulfur (Fe-S) centers, to quinones in the respiratory chain. Couples the redox reaction to proton translocation (for every two electrons transferred, four hydrogen ions are translocated across the cytoplasmic membrane), and thus conserves the redox energy in a proton gradient (By similarity).</text>
</comment>
<comment type="catalytic activity">
    <reaction>
        <text>a quinone + NADH + 5 H(+)(in) = a quinol + NAD(+) + 4 H(+)(out)</text>
        <dbReference type="Rhea" id="RHEA:57888"/>
        <dbReference type="ChEBI" id="CHEBI:15378"/>
        <dbReference type="ChEBI" id="CHEBI:24646"/>
        <dbReference type="ChEBI" id="CHEBI:57540"/>
        <dbReference type="ChEBI" id="CHEBI:57945"/>
        <dbReference type="ChEBI" id="CHEBI:132124"/>
    </reaction>
</comment>
<comment type="subcellular location">
    <subcellularLocation>
        <location evidence="3">Cell membrane</location>
        <topology evidence="3">Multi-pass membrane protein</topology>
    </subcellularLocation>
</comment>
<comment type="similarity">
    <text evidence="3">Belongs to the complex I subunit 4 family.</text>
</comment>
<gene>
    <name type="primary">nuoM</name>
    <name type="ordered locus">RF_1258</name>
</gene>
<reference key="1">
    <citation type="journal article" date="2005" name="PLoS Biol.">
        <title>The genome sequence of Rickettsia felis identifies the first putative conjugative plasmid in an obligate intracellular parasite.</title>
        <authorList>
            <person name="Ogata H."/>
            <person name="Renesto P."/>
            <person name="Audic S."/>
            <person name="Robert C."/>
            <person name="Blanc G."/>
            <person name="Fournier P.-E."/>
            <person name="Parinello H."/>
            <person name="Claverie J.-M."/>
            <person name="Raoult D."/>
        </authorList>
    </citation>
    <scope>NUCLEOTIDE SEQUENCE [LARGE SCALE GENOMIC DNA]</scope>
    <source>
        <strain>ATCC VR-1525 / URRWXCal2</strain>
    </source>
</reference>
<dbReference type="EC" id="7.1.1.-"/>
<dbReference type="EMBL" id="CP000053">
    <property type="protein sequence ID" value="AAY62109.1"/>
    <property type="molecule type" value="Genomic_DNA"/>
</dbReference>
<dbReference type="SMR" id="Q4UK26"/>
<dbReference type="STRING" id="315456.RF_1258"/>
<dbReference type="KEGG" id="rfe:RF_1258"/>
<dbReference type="eggNOG" id="COG1008">
    <property type="taxonomic scope" value="Bacteria"/>
</dbReference>
<dbReference type="HOGENOM" id="CLU_007100_4_4_5"/>
<dbReference type="OrthoDB" id="9768329at2"/>
<dbReference type="Proteomes" id="UP000008548">
    <property type="component" value="Chromosome"/>
</dbReference>
<dbReference type="GO" id="GO:0005886">
    <property type="term" value="C:plasma membrane"/>
    <property type="evidence" value="ECO:0007669"/>
    <property type="project" value="UniProtKB-SubCell"/>
</dbReference>
<dbReference type="GO" id="GO:0008137">
    <property type="term" value="F:NADH dehydrogenase (ubiquinone) activity"/>
    <property type="evidence" value="ECO:0007669"/>
    <property type="project" value="InterPro"/>
</dbReference>
<dbReference type="GO" id="GO:0048039">
    <property type="term" value="F:ubiquinone binding"/>
    <property type="evidence" value="ECO:0007669"/>
    <property type="project" value="TreeGrafter"/>
</dbReference>
<dbReference type="GO" id="GO:0042773">
    <property type="term" value="P:ATP synthesis coupled electron transport"/>
    <property type="evidence" value="ECO:0007669"/>
    <property type="project" value="InterPro"/>
</dbReference>
<dbReference type="GO" id="GO:0015990">
    <property type="term" value="P:electron transport coupled proton transport"/>
    <property type="evidence" value="ECO:0007669"/>
    <property type="project" value="TreeGrafter"/>
</dbReference>
<dbReference type="InterPro" id="IPR010227">
    <property type="entry name" value="NADH_Q_OxRdtase_chainM/4"/>
</dbReference>
<dbReference type="InterPro" id="IPR003918">
    <property type="entry name" value="NADH_UbQ_OxRdtase"/>
</dbReference>
<dbReference type="InterPro" id="IPR001750">
    <property type="entry name" value="ND/Mrp_TM"/>
</dbReference>
<dbReference type="NCBIfam" id="TIGR01972">
    <property type="entry name" value="NDH_I_M"/>
    <property type="match status" value="1"/>
</dbReference>
<dbReference type="NCBIfam" id="NF004499">
    <property type="entry name" value="PRK05846.1-3"/>
    <property type="match status" value="1"/>
</dbReference>
<dbReference type="NCBIfam" id="NF004506">
    <property type="entry name" value="PRK05846.2-6"/>
    <property type="match status" value="1"/>
</dbReference>
<dbReference type="PANTHER" id="PTHR43507">
    <property type="entry name" value="NADH-UBIQUINONE OXIDOREDUCTASE CHAIN 4"/>
    <property type="match status" value="1"/>
</dbReference>
<dbReference type="PANTHER" id="PTHR43507:SF1">
    <property type="entry name" value="NADH-UBIQUINONE OXIDOREDUCTASE CHAIN 4"/>
    <property type="match status" value="1"/>
</dbReference>
<dbReference type="Pfam" id="PF00361">
    <property type="entry name" value="Proton_antipo_M"/>
    <property type="match status" value="1"/>
</dbReference>
<dbReference type="PRINTS" id="PR01437">
    <property type="entry name" value="NUOXDRDTASE4"/>
</dbReference>
<keyword id="KW-1003">Cell membrane</keyword>
<keyword id="KW-0472">Membrane</keyword>
<keyword id="KW-0520">NAD</keyword>
<keyword id="KW-0874">Quinone</keyword>
<keyword id="KW-1278">Translocase</keyword>
<keyword id="KW-0812">Transmembrane</keyword>
<keyword id="KW-1133">Transmembrane helix</keyword>
<protein>
    <recommendedName>
        <fullName>NADH-quinone oxidoreductase subunit M</fullName>
        <ecNumber>7.1.1.-</ecNumber>
    </recommendedName>
    <alternativeName>
        <fullName>NADH dehydrogenase I subunit M</fullName>
    </alternativeName>
    <alternativeName>
        <fullName>NDH-1 subunit M</fullName>
    </alternativeName>
</protein>
<evidence type="ECO:0000250" key="1"/>
<evidence type="ECO:0000255" key="2"/>
<evidence type="ECO:0000305" key="3"/>
<name>NUOM_RICFE</name>